<sequence>MDNPPDFDSLLAAFDEDVGIFPHTPATPGDPYQGVSLQTPCVPVPSLAGQSGTYRPHSSYHGQRSLSSGPVPAAHSPRSGRPGQHSTSNGVAAAAPPAATRAVCDTAGPTTDTSSNRPGGRNSSNGADESGESSSDRSPSYSPCDSYCDPDRVSSYRSSVDGSPESGDIESASGSGGTSSPPLLEILAADFGEDTKALDPDYYLRADPRFKAYFYGMDEISPTTSEDIDELLVLLSPQSVNRASERQLADTAASALRAPSPVFWSAFDSRYPHLAPANQSNSDPLCPETSTASAQILHTNSPTPPTSTSPAPIPSPTQPPACLPSPAPISSPVQPPALLPLIFSPITPVEFIQPQSPPSPPQAPSPPAHSSSSCSPSHLAPSPLSSSPLSSPPQLSPAPVSPPSSPPPLSPGELAPSPDPPRHSISSQPQSCPVPSLGRSADFRREVAAPRVRGAGFRYVYRLSTSVAIPSPPREEVELIKHLPGSYAKLWLHDPDGFSPLPEELKRAGRQNMRSFLLTLPDTHRCSAYWDCLATEALLREILPPPHTSSPQKCPRIIELPREPPLLDGDYKPFDWDVECNYAPPLPDFPEPICELSKDWVGCKIWLFSHCSRLVLSVLDDALHSESHENVLGSRGCGWGPRSECPVPPPGMVTLPSCVWEAAARLPTPALQIPKYAYIISAFLRFLGLRVTPEFVFKVPRLSYRLLDRLRCLRRVQYMAYILTQDFSYQLQAAQGLPCFPACAPPPGAGTPLDEDWYGIPATRCPTIPDRLRHCGQFYSDNYCPVLTEITWVDGRDGSTNPWTGLAWKDFKCLHYRYLFYNVRKGFVMAPENYLTENSVIPGCEVTFEMPQPSTTLPPALSAAIREARVELRNRNNIQTGDGSESGEHRDSKVSYAFMVQQLAIAMVELGFPAYGPAIEKRVRPLYKALCDWRAAVTLAARRRFQQLRCNANMDDDGQPMFPPLPVPDWNNPSTDWRPSPPRSGPKKDFCGDLPAPLTSGPRLTTPSSGRMSELPHTTSSPRSSPRPRGPETSPSNEHIIISPPRNPPSNTTHRNVGHVSRSPSSSSSSSSSSSPSSSSLIVPSSPSSSRSPSPSPPRPRADCSSRPRRGRGSNRGGRSGPQSKGRKTSPRTRKLEDEDYLPQETANRRGGGRPRGRPPKSGRAVQRNDIQVTSSSGLADTSPYDLCGSVWWEVPLPPPGRCWFGGLGGHRQALTDSPEIVEAIHRFNTSHGPVPVYVEEMKDYAKQYDALVNSLFHKSMKVNPLNWMHHGKLSPADAALNHIYVQKFQSSYDSPGAAVTGTVNRCIPHIAGAMKERKLLWAFPHIAASIAMTRRYCKDQKTFLFRSLKKAYASMAFPDNSSETEKGISSKPSTSPSVLITTSTQTTAPPHAPKIDVTAIHGRVYQSVVDLSRCLADGSLDDPEFSFAGCTRPDCLVEEFDAARPLEELADACVLACDSVVAALLCGPDGPHRVAKMLSFYDSRITPHVPDLQQWEKCRILLVSWYHELSDLRAAVYGAYGNTPTSQHLDERALAARVVSLIAETIGPLVRQDPDRAWVRMGSRDITSLLLRDWRGTNDGDPGLVKAKHLRRTAELLNDGRSSKGTYGVFAPPRRPDQLFRGPGRPRRSTSSSQSASDKSPIKSTHRHTSDPIPISTPRPERDPAGTPHENTMSGPVQPAANGHSCSSTPTPAKKGNKTSSDTISLKDPTKTRIKASAKAQTDETLPETSTAHPSAMDQSSSLERKNLYTGPAVSSKERRRSAQSSTPSDIGGVSRKRKSAPEQYKQGLQTPLPMPEPSVGQTLLDPTTTTHDILSSSLPNRSCSSSPSPSKRPYHPSCYSPTDIMTGALVGPRGRQDRAAFRQFPVGTVIGQTPPQSVLNAYCPNGAFVELVEFARIPEPWQEVLRYSPEAMADIARVANALPGKYNSNEIITSAASEAFHTATSKLRARTAWMRYQQESPDDVSIVVLYSPLPGEHLFCVPAPDTPPGGLKFDNKRGGLSFLLAAFSNRLCLPKSSAWAGRWKAAPDISPLTRMGVLFLSTEDLGYQGAVEYLQRQCMKRKKKLIIMDTVEDRYRLPNGPCIIEEATRYMKCIISPRSQCCVRWPGLLDFGTTIITSRDVVGPLTLMDLEQYYYCEIGIEDSTINLCCTGNVRYTVETRLEDVSCVPTTPLFYFAAVKHVRPDFLCGETYSNRAARKWGLCAPLRPIYVIESKMNAIVSPSFLHPTARNLCRSVILPPDPEARPVVVHIPEGTCSALAEDMVASIRSSCITWGQHEEGGPETTAQENSDIRAMKVRPPTKPPYMSPLNIGNRDTTFTD</sequence>
<gene>
    <name type="primary">MDV084</name>
    <name type="synonym">MDV100</name>
</gene>
<reference key="1">
    <citation type="journal article" date="2000" name="J. Virol.">
        <title>The genome of a very virulent Marek's disease virus.</title>
        <authorList>
            <person name="Tulman E.R."/>
            <person name="Afonso C.L."/>
            <person name="Lu Z."/>
            <person name="Zsak L."/>
            <person name="Rock D.L."/>
            <person name="Kutish G.F."/>
        </authorList>
    </citation>
    <scope>NUCLEOTIDE SEQUENCE [LARGE SCALE GENOMIC DNA]</scope>
</reference>
<keyword id="KW-0010">Activator</keyword>
<keyword id="KW-0238">DNA-binding</keyword>
<keyword id="KW-0244">Early protein</keyword>
<keyword id="KW-1048">Host nucleus</keyword>
<keyword id="KW-0597">Phosphoprotein</keyword>
<keyword id="KW-1185">Reference proteome</keyword>
<keyword id="KW-0804">Transcription</keyword>
<keyword id="KW-0805">Transcription regulation</keyword>
<organismHost>
    <name type="scientific">Gallus gallus</name>
    <name type="common">Chicken</name>
    <dbReference type="NCBI Taxonomy" id="9031"/>
</organismHost>
<protein>
    <recommendedName>
        <fullName>Major viral transcription factor ICP4 homolog</fullName>
    </recommendedName>
    <alternativeName>
        <fullName>Immediate-early protein IE175</fullName>
    </alternativeName>
</protein>
<evidence type="ECO:0000250" key="1"/>
<evidence type="ECO:0000256" key="2">
    <source>
        <dbReference type="SAM" id="MobiDB-lite"/>
    </source>
</evidence>
<evidence type="ECO:0000305" key="3"/>
<dbReference type="EMBL" id="AF243438">
    <property type="protein sequence ID" value="AAG14273.1"/>
    <property type="molecule type" value="Genomic_DNA"/>
</dbReference>
<dbReference type="EMBL" id="AF243438">
    <property type="protein sequence ID" value="AAG14284.1"/>
    <property type="molecule type" value="Genomic_DNA"/>
</dbReference>
<dbReference type="RefSeq" id="YP_001034000.1">
    <property type="nucleotide sequence ID" value="NC_002229.3"/>
</dbReference>
<dbReference type="RefSeq" id="YP_001034018.1">
    <property type="nucleotide sequence ID" value="NC_002229.3"/>
</dbReference>
<dbReference type="SMR" id="Q9DGT6"/>
<dbReference type="GeneID" id="4811466"/>
<dbReference type="GeneID" id="4811547"/>
<dbReference type="KEGG" id="vg:4811466"/>
<dbReference type="KEGG" id="vg:4811547"/>
<dbReference type="Proteomes" id="UP000008072">
    <property type="component" value="Segment"/>
</dbReference>
<dbReference type="GO" id="GO:0042025">
    <property type="term" value="C:host cell nucleus"/>
    <property type="evidence" value="ECO:0007669"/>
    <property type="project" value="UniProtKB-SubCell"/>
</dbReference>
<dbReference type="GO" id="GO:0003677">
    <property type="term" value="F:DNA binding"/>
    <property type="evidence" value="ECO:0007669"/>
    <property type="project" value="UniProtKB-KW"/>
</dbReference>
<dbReference type="GO" id="GO:0039695">
    <property type="term" value="P:DNA-templated viral transcription"/>
    <property type="evidence" value="ECO:0000250"/>
    <property type="project" value="UniProtKB"/>
</dbReference>
<dbReference type="GO" id="GO:0045893">
    <property type="term" value="P:positive regulation of DNA-templated transcription"/>
    <property type="evidence" value="ECO:0007669"/>
    <property type="project" value="InterPro"/>
</dbReference>
<dbReference type="InterPro" id="IPR005205">
    <property type="entry name" value="Herpes_ICP4_C"/>
</dbReference>
<dbReference type="InterPro" id="IPR005206">
    <property type="entry name" value="Herpes_ICP4_N"/>
</dbReference>
<dbReference type="PANTHER" id="PTHR48125">
    <property type="entry name" value="LP07818P1"/>
    <property type="match status" value="1"/>
</dbReference>
<dbReference type="PANTHER" id="PTHR48125:SF10">
    <property type="entry name" value="OS12G0136300 PROTEIN"/>
    <property type="match status" value="1"/>
</dbReference>
<dbReference type="Pfam" id="PF03585">
    <property type="entry name" value="Herpes_ICP4_C"/>
    <property type="match status" value="1"/>
</dbReference>
<dbReference type="Pfam" id="PF03584">
    <property type="entry name" value="Herpes_ICP4_N"/>
    <property type="match status" value="1"/>
</dbReference>
<name>ICP4_GAHVM</name>
<feature type="chain" id="PRO_0000406502" description="Major viral transcription factor ICP4 homolog">
    <location>
        <begin position="1"/>
        <end position="2321"/>
    </location>
</feature>
<feature type="region of interest" description="Disordered" evidence="2">
    <location>
        <begin position="19"/>
        <end position="183"/>
    </location>
</feature>
<feature type="region of interest" description="Disordered" evidence="2">
    <location>
        <begin position="296"/>
        <end position="329"/>
    </location>
</feature>
<feature type="region of interest" description="Disordered" evidence="2">
    <location>
        <begin position="350"/>
        <end position="438"/>
    </location>
</feature>
<feature type="region of interest" description="Disordered" evidence="2">
    <location>
        <begin position="954"/>
        <end position="1180"/>
    </location>
</feature>
<feature type="region of interest" description="Disordered" evidence="2">
    <location>
        <begin position="1360"/>
        <end position="1392"/>
    </location>
</feature>
<feature type="region of interest" description="Disordered" evidence="2">
    <location>
        <begin position="1597"/>
        <end position="1841"/>
    </location>
</feature>
<feature type="region of interest" description="Disordered" evidence="2">
    <location>
        <begin position="2277"/>
        <end position="2321"/>
    </location>
</feature>
<feature type="compositionally biased region" description="Low complexity" evidence="2">
    <location>
        <begin position="114"/>
        <end position="147"/>
    </location>
</feature>
<feature type="compositionally biased region" description="Pro residues" evidence="2">
    <location>
        <begin position="302"/>
        <end position="329"/>
    </location>
</feature>
<feature type="compositionally biased region" description="Pro residues" evidence="2">
    <location>
        <begin position="355"/>
        <end position="367"/>
    </location>
</feature>
<feature type="compositionally biased region" description="Low complexity" evidence="2">
    <location>
        <begin position="368"/>
        <end position="389"/>
    </location>
</feature>
<feature type="compositionally biased region" description="Pro residues" evidence="2">
    <location>
        <begin position="390"/>
        <end position="410"/>
    </location>
</feature>
<feature type="compositionally biased region" description="Polar residues" evidence="2">
    <location>
        <begin position="424"/>
        <end position="433"/>
    </location>
</feature>
<feature type="compositionally biased region" description="Polar residues" evidence="2">
    <location>
        <begin position="1002"/>
        <end position="1011"/>
    </location>
</feature>
<feature type="compositionally biased region" description="Low complexity" evidence="2">
    <location>
        <begin position="1031"/>
        <end position="1093"/>
    </location>
</feature>
<feature type="compositionally biased region" description="Basic residues" evidence="2">
    <location>
        <begin position="1151"/>
        <end position="1161"/>
    </location>
</feature>
<feature type="compositionally biased region" description="Polar residues" evidence="2">
    <location>
        <begin position="1169"/>
        <end position="1180"/>
    </location>
</feature>
<feature type="compositionally biased region" description="Polar residues" evidence="2">
    <location>
        <begin position="1371"/>
        <end position="1389"/>
    </location>
</feature>
<feature type="compositionally biased region" description="Low complexity" evidence="2">
    <location>
        <begin position="1630"/>
        <end position="1644"/>
    </location>
</feature>
<feature type="compositionally biased region" description="Polar residues" evidence="2">
    <location>
        <begin position="1720"/>
        <end position="1743"/>
    </location>
</feature>
<feature type="compositionally biased region" description="Polar residues" evidence="2">
    <location>
        <begin position="1801"/>
        <end position="1816"/>
    </location>
</feature>
<feature type="compositionally biased region" description="Low complexity" evidence="2">
    <location>
        <begin position="1817"/>
        <end position="1839"/>
    </location>
</feature>
<proteinExistence type="inferred from homology"/>
<organism>
    <name type="scientific">Gallid herpesvirus 2 (strain Chicken/Md5/ATCC VR-987)</name>
    <name type="common">GaHV-2</name>
    <name type="synonym">Marek's disease herpesvirus type 1</name>
    <dbReference type="NCBI Taxonomy" id="10389"/>
    <lineage>
        <taxon>Viruses</taxon>
        <taxon>Duplodnaviria</taxon>
        <taxon>Heunggongvirae</taxon>
        <taxon>Peploviricota</taxon>
        <taxon>Herviviricetes</taxon>
        <taxon>Herpesvirales</taxon>
        <taxon>Orthoherpesviridae</taxon>
        <taxon>Alphaherpesvirinae</taxon>
        <taxon>Mardivirus</taxon>
        <taxon>Mardivirus gallidalpha2</taxon>
        <taxon>Gallid alphaherpesvirus 2</taxon>
    </lineage>
</organism>
<accession>Q9DGT6</accession>
<comment type="function">
    <text evidence="1">This IE protein is a multifunctional protein capable of migrating to the nucleus, binding to DNA, trans-activating other viral genes, and autoregulating its own synthesis. It is required for the switch from immediate-early to early mode of gene expression (By similarity).</text>
</comment>
<comment type="subcellular location">
    <subcellularLocation>
        <location evidence="1">Host nucleus</location>
    </subcellularLocation>
</comment>
<comment type="PTM">
    <text evidence="1">A long stretch of serine residues may be a major site of phosphorylation.</text>
</comment>
<comment type="similarity">
    <text evidence="3">Belongs to the herpesviridae ICP4 family.</text>
</comment>